<proteinExistence type="inferred from homology"/>
<gene>
    <name evidence="1" type="primary">gatC</name>
</gene>
<protein>
    <recommendedName>
        <fullName>Glutamyl-tRNA(Gln) amidotransferase subunit C</fullName>
        <shortName>Glu-ADT subunit C</shortName>
        <ecNumber evidence="1">6.3.5.-</ecNumber>
    </recommendedName>
</protein>
<sequence>MTITTEDILDCANLSRLALDEKTAQNYAGNLDKILAMMDILDGVNTDNIKPLANIHEACNELRADIANSDIGRDGFQAVAPMVQDGLYLVPQVIE</sequence>
<reference key="1">
    <citation type="submission" date="2001-09" db="EMBL/GenBank/DDBJ databases">
        <title>The Moraxella (Branhamella) catarrhalis chromosomal beta-lactamase gene is flanked by an amidase gene and a conserved gene of unknown function.</title>
        <authorList>
            <person name="Beaulieu D."/>
            <person name="Piche L."/>
            <person name="Parr T.R. Jr."/>
            <person name="Roeger-Lawry K."/>
            <person name="Rosteck P."/>
            <person name="Roy P.H."/>
        </authorList>
    </citation>
    <scope>NUCLEOTIDE SEQUENCE [GENOMIC DNA]</scope>
    <source>
        <strain>ATCC 53879 / E22</strain>
    </source>
</reference>
<evidence type="ECO:0000255" key="1">
    <source>
        <dbReference type="HAMAP-Rule" id="MF_00122"/>
    </source>
</evidence>
<name>GATC_MORCA</name>
<comment type="function">
    <text evidence="1">Allows the formation of correctly charged Asn-tRNA(Asn) or Gln-tRNA(Gln) through the transamidation of misacylated Asp-tRNA(Asn) or Glu-tRNA(Gln) in organisms which lack either or both of asparaginyl-tRNA or glutaminyl-tRNA synthetases. The reaction takes place in the presence of glutamine and ATP through an activated phospho-Asp-tRNA(Asn) or phospho-Glu-tRNA(Gln).</text>
</comment>
<comment type="catalytic activity">
    <reaction evidence="1">
        <text>L-glutamyl-tRNA(Gln) + L-glutamine + ATP + H2O = L-glutaminyl-tRNA(Gln) + L-glutamate + ADP + phosphate + H(+)</text>
        <dbReference type="Rhea" id="RHEA:17521"/>
        <dbReference type="Rhea" id="RHEA-COMP:9681"/>
        <dbReference type="Rhea" id="RHEA-COMP:9684"/>
        <dbReference type="ChEBI" id="CHEBI:15377"/>
        <dbReference type="ChEBI" id="CHEBI:15378"/>
        <dbReference type="ChEBI" id="CHEBI:29985"/>
        <dbReference type="ChEBI" id="CHEBI:30616"/>
        <dbReference type="ChEBI" id="CHEBI:43474"/>
        <dbReference type="ChEBI" id="CHEBI:58359"/>
        <dbReference type="ChEBI" id="CHEBI:78520"/>
        <dbReference type="ChEBI" id="CHEBI:78521"/>
        <dbReference type="ChEBI" id="CHEBI:456216"/>
    </reaction>
</comment>
<comment type="catalytic activity">
    <reaction evidence="1">
        <text>L-aspartyl-tRNA(Asn) + L-glutamine + ATP + H2O = L-asparaginyl-tRNA(Asn) + L-glutamate + ADP + phosphate + 2 H(+)</text>
        <dbReference type="Rhea" id="RHEA:14513"/>
        <dbReference type="Rhea" id="RHEA-COMP:9674"/>
        <dbReference type="Rhea" id="RHEA-COMP:9677"/>
        <dbReference type="ChEBI" id="CHEBI:15377"/>
        <dbReference type="ChEBI" id="CHEBI:15378"/>
        <dbReference type="ChEBI" id="CHEBI:29985"/>
        <dbReference type="ChEBI" id="CHEBI:30616"/>
        <dbReference type="ChEBI" id="CHEBI:43474"/>
        <dbReference type="ChEBI" id="CHEBI:58359"/>
        <dbReference type="ChEBI" id="CHEBI:78515"/>
        <dbReference type="ChEBI" id="CHEBI:78516"/>
        <dbReference type="ChEBI" id="CHEBI:456216"/>
    </reaction>
</comment>
<comment type="subunit">
    <text evidence="1">Heterotrimer of A, B and C subunits.</text>
</comment>
<comment type="similarity">
    <text evidence="1">Belongs to the GatC family.</text>
</comment>
<dbReference type="EC" id="6.3.5.-" evidence="1"/>
<dbReference type="EMBL" id="U49269">
    <property type="protein sequence ID" value="AAL04408.1"/>
    <property type="molecule type" value="Genomic_DNA"/>
</dbReference>
<dbReference type="RefSeq" id="WP_003658632.1">
    <property type="nucleotide sequence ID" value="NZ_RYES01000001.1"/>
</dbReference>
<dbReference type="SMR" id="P58528"/>
<dbReference type="GeneID" id="66584962"/>
<dbReference type="KEGG" id="mcat:MC25239_01519"/>
<dbReference type="KEGG" id="mcs:DR90_356"/>
<dbReference type="eggNOG" id="COG0721">
    <property type="taxonomic scope" value="Bacteria"/>
</dbReference>
<dbReference type="OMA" id="HDINRER"/>
<dbReference type="GO" id="GO:0050566">
    <property type="term" value="F:asparaginyl-tRNA synthase (glutamine-hydrolyzing) activity"/>
    <property type="evidence" value="ECO:0007669"/>
    <property type="project" value="RHEA"/>
</dbReference>
<dbReference type="GO" id="GO:0005524">
    <property type="term" value="F:ATP binding"/>
    <property type="evidence" value="ECO:0007669"/>
    <property type="project" value="UniProtKB-KW"/>
</dbReference>
<dbReference type="GO" id="GO:0050567">
    <property type="term" value="F:glutaminyl-tRNA synthase (glutamine-hydrolyzing) activity"/>
    <property type="evidence" value="ECO:0007669"/>
    <property type="project" value="UniProtKB-UniRule"/>
</dbReference>
<dbReference type="GO" id="GO:0006450">
    <property type="term" value="P:regulation of translational fidelity"/>
    <property type="evidence" value="ECO:0007669"/>
    <property type="project" value="InterPro"/>
</dbReference>
<dbReference type="GO" id="GO:0006412">
    <property type="term" value="P:translation"/>
    <property type="evidence" value="ECO:0007669"/>
    <property type="project" value="UniProtKB-UniRule"/>
</dbReference>
<dbReference type="Gene3D" id="1.10.20.60">
    <property type="entry name" value="Glu-tRNAGln amidotransferase C subunit, N-terminal domain"/>
    <property type="match status" value="1"/>
</dbReference>
<dbReference type="HAMAP" id="MF_00122">
    <property type="entry name" value="GatC"/>
    <property type="match status" value="1"/>
</dbReference>
<dbReference type="InterPro" id="IPR036113">
    <property type="entry name" value="Asp/Glu-ADT_sf_sub_c"/>
</dbReference>
<dbReference type="InterPro" id="IPR003837">
    <property type="entry name" value="GatC"/>
</dbReference>
<dbReference type="NCBIfam" id="TIGR00135">
    <property type="entry name" value="gatC"/>
    <property type="match status" value="1"/>
</dbReference>
<dbReference type="Pfam" id="PF02686">
    <property type="entry name" value="GatC"/>
    <property type="match status" value="1"/>
</dbReference>
<dbReference type="SUPFAM" id="SSF141000">
    <property type="entry name" value="Glu-tRNAGln amidotransferase C subunit"/>
    <property type="match status" value="1"/>
</dbReference>
<feature type="chain" id="PRO_0000105310" description="Glutamyl-tRNA(Gln) amidotransferase subunit C">
    <location>
        <begin position="1"/>
        <end position="95"/>
    </location>
</feature>
<accession>P58528</accession>
<accession>Q937F4</accession>
<keyword id="KW-0067">ATP-binding</keyword>
<keyword id="KW-0436">Ligase</keyword>
<keyword id="KW-0547">Nucleotide-binding</keyword>
<keyword id="KW-0648">Protein biosynthesis</keyword>
<organism>
    <name type="scientific">Moraxella catarrhalis</name>
    <name type="common">Branhamella catarrhalis</name>
    <dbReference type="NCBI Taxonomy" id="480"/>
    <lineage>
        <taxon>Bacteria</taxon>
        <taxon>Pseudomonadati</taxon>
        <taxon>Pseudomonadota</taxon>
        <taxon>Gammaproteobacteria</taxon>
        <taxon>Moraxellales</taxon>
        <taxon>Moraxellaceae</taxon>
        <taxon>Moraxella</taxon>
    </lineage>
</organism>